<reference key="1">
    <citation type="journal article" date="2001" name="Nature">
        <title>Genome sequence of enterohaemorrhagic Escherichia coli O157:H7.</title>
        <authorList>
            <person name="Perna N.T."/>
            <person name="Plunkett G. III"/>
            <person name="Burland V."/>
            <person name="Mau B."/>
            <person name="Glasner J.D."/>
            <person name="Rose D.J."/>
            <person name="Mayhew G.F."/>
            <person name="Evans P.S."/>
            <person name="Gregor J."/>
            <person name="Kirkpatrick H.A."/>
            <person name="Posfai G."/>
            <person name="Hackett J."/>
            <person name="Klink S."/>
            <person name="Boutin A."/>
            <person name="Shao Y."/>
            <person name="Miller L."/>
            <person name="Grotbeck E.J."/>
            <person name="Davis N.W."/>
            <person name="Lim A."/>
            <person name="Dimalanta E.T."/>
            <person name="Potamousis K."/>
            <person name="Apodaca J."/>
            <person name="Anantharaman T.S."/>
            <person name="Lin J."/>
            <person name="Yen G."/>
            <person name="Schwartz D.C."/>
            <person name="Welch R.A."/>
            <person name="Blattner F.R."/>
        </authorList>
    </citation>
    <scope>NUCLEOTIDE SEQUENCE [LARGE SCALE GENOMIC DNA]</scope>
    <source>
        <strain>O157:H7 / EDL933 / ATCC 700927 / EHEC</strain>
    </source>
</reference>
<reference key="2">
    <citation type="journal article" date="2001" name="DNA Res.">
        <title>Complete genome sequence of enterohemorrhagic Escherichia coli O157:H7 and genomic comparison with a laboratory strain K-12.</title>
        <authorList>
            <person name="Hayashi T."/>
            <person name="Makino K."/>
            <person name="Ohnishi M."/>
            <person name="Kurokawa K."/>
            <person name="Ishii K."/>
            <person name="Yokoyama K."/>
            <person name="Han C.-G."/>
            <person name="Ohtsubo E."/>
            <person name="Nakayama K."/>
            <person name="Murata T."/>
            <person name="Tanaka M."/>
            <person name="Tobe T."/>
            <person name="Iida T."/>
            <person name="Takami H."/>
            <person name="Honda T."/>
            <person name="Sasakawa C."/>
            <person name="Ogasawara N."/>
            <person name="Yasunaga T."/>
            <person name="Kuhara S."/>
            <person name="Shiba T."/>
            <person name="Hattori M."/>
            <person name="Shinagawa H."/>
        </authorList>
    </citation>
    <scope>NUCLEOTIDE SEQUENCE [LARGE SCALE GENOMIC DNA]</scope>
    <source>
        <strain>O157:H7 / Sakai / RIMD 0509952 / EHEC</strain>
    </source>
</reference>
<sequence length="420" mass="45839">MSFATISVIGLGYIGLPTAAAFASRQKQVIGVDINQHAVDTINRGEIHIVEPDLASVVKTAVEGGFLRASTTPVEADAWLIAVPTPFKGDHEPDMTYVESAARSIAPVLKKGALVILESTSPVGSTEKMAEWLAEMRPDLTFPQQVGEQADVNIAYCPERVLPGQVMVELIKNDRVIGGMTPVCSARASELYKIFLEGECVVTNSRTAEMCKLTENSFRDVNIAFANELSLICADQGINVWELIRLANRHPRVNILQPGPGVGGHCIAVDPWFIVAQNPQQARLIRTAREVNDHKPFWVIDQVKAAVADCLAATDKRASELKIACFGLAFKPNIDDLRESPAMEIAELIAQWHSGETLVVEPNIHQLPKKLTGLCTLAQLDEALATADVLVMLVDHSQFKVINGDNVHQQYVVDAKGVWR</sequence>
<gene>
    <name evidence="1" type="primary">wecC</name>
    <name type="synonym">rffD</name>
    <name type="ordered locus">Z5298</name>
    <name type="ordered locus">ECs4720</name>
</gene>
<dbReference type="EC" id="1.1.1.336" evidence="1"/>
<dbReference type="EMBL" id="AE005174">
    <property type="protein sequence ID" value="AAG58982.1"/>
    <property type="molecule type" value="Genomic_DNA"/>
</dbReference>
<dbReference type="EMBL" id="BA000007">
    <property type="protein sequence ID" value="BAB38143.1"/>
    <property type="molecule type" value="Genomic_DNA"/>
</dbReference>
<dbReference type="PIR" id="B86065">
    <property type="entry name" value="B86065"/>
</dbReference>
<dbReference type="PIR" id="H91218">
    <property type="entry name" value="H91218"/>
</dbReference>
<dbReference type="RefSeq" id="NP_312747.1">
    <property type="nucleotide sequence ID" value="NC_002695.1"/>
</dbReference>
<dbReference type="RefSeq" id="WP_000006621.1">
    <property type="nucleotide sequence ID" value="NZ_VOAI01000017.1"/>
</dbReference>
<dbReference type="SMR" id="P67066"/>
<dbReference type="STRING" id="155864.Z5298"/>
<dbReference type="GeneID" id="75174019"/>
<dbReference type="GeneID" id="915235"/>
<dbReference type="KEGG" id="ece:Z5298"/>
<dbReference type="KEGG" id="ecs:ECs_4720"/>
<dbReference type="PATRIC" id="fig|386585.9.peg.4924"/>
<dbReference type="eggNOG" id="COG0677">
    <property type="taxonomic scope" value="Bacteria"/>
</dbReference>
<dbReference type="HOGENOM" id="CLU_023810_3_2_6"/>
<dbReference type="OMA" id="IDPWFIV"/>
<dbReference type="UniPathway" id="UPA00566"/>
<dbReference type="Proteomes" id="UP000000558">
    <property type="component" value="Chromosome"/>
</dbReference>
<dbReference type="Proteomes" id="UP000002519">
    <property type="component" value="Chromosome"/>
</dbReference>
<dbReference type="GO" id="GO:0051287">
    <property type="term" value="F:NAD binding"/>
    <property type="evidence" value="ECO:0007669"/>
    <property type="project" value="InterPro"/>
</dbReference>
<dbReference type="GO" id="GO:0016628">
    <property type="term" value="F:oxidoreductase activity, acting on the CH-CH group of donors, NAD or NADP as acceptor"/>
    <property type="evidence" value="ECO:0007669"/>
    <property type="project" value="InterPro"/>
</dbReference>
<dbReference type="GO" id="GO:0089714">
    <property type="term" value="F:UDP-N-acetyl-D-mannosamine dehydrogenase activity"/>
    <property type="evidence" value="ECO:0007669"/>
    <property type="project" value="UniProtKB-UniRule"/>
</dbReference>
<dbReference type="GO" id="GO:0009246">
    <property type="term" value="P:enterobacterial common antigen biosynthetic process"/>
    <property type="evidence" value="ECO:0007669"/>
    <property type="project" value="UniProtKB-UniRule"/>
</dbReference>
<dbReference type="FunFam" id="3.40.50.720:FF:000139">
    <property type="entry name" value="UDP-N-acetyl-D-mannosamine dehydrogenase"/>
    <property type="match status" value="1"/>
</dbReference>
<dbReference type="FunFam" id="3.40.50.720:FF:000235">
    <property type="entry name" value="UDP-N-acetyl-D-mannosamine dehydrogenase"/>
    <property type="match status" value="1"/>
</dbReference>
<dbReference type="Gene3D" id="1.20.5.100">
    <property type="entry name" value="Cytochrome c1, transmembrane anchor, C-terminal"/>
    <property type="match status" value="1"/>
</dbReference>
<dbReference type="Gene3D" id="3.40.50.720">
    <property type="entry name" value="NAD(P)-binding Rossmann-like Domain"/>
    <property type="match status" value="2"/>
</dbReference>
<dbReference type="HAMAP" id="MF_02029">
    <property type="entry name" value="WecC_RffD"/>
    <property type="match status" value="1"/>
</dbReference>
<dbReference type="InterPro" id="IPR008927">
    <property type="entry name" value="6-PGluconate_DH-like_C_sf"/>
</dbReference>
<dbReference type="InterPro" id="IPR036291">
    <property type="entry name" value="NAD(P)-bd_dom_sf"/>
</dbReference>
<dbReference type="InterPro" id="IPR017476">
    <property type="entry name" value="UDP-Glc/GDP-Man"/>
</dbReference>
<dbReference type="InterPro" id="IPR014027">
    <property type="entry name" value="UDP-Glc/GDP-Man_DH_C"/>
</dbReference>
<dbReference type="InterPro" id="IPR036220">
    <property type="entry name" value="UDP-Glc/GDP-Man_DH_C_sf"/>
</dbReference>
<dbReference type="InterPro" id="IPR014026">
    <property type="entry name" value="UDP-Glc/GDP-Man_DH_dimer"/>
</dbReference>
<dbReference type="InterPro" id="IPR001732">
    <property type="entry name" value="UDP-Glc/GDP-Man_DH_N"/>
</dbReference>
<dbReference type="InterPro" id="IPR028359">
    <property type="entry name" value="UDP_ManNAc/GlcNAc_DH"/>
</dbReference>
<dbReference type="InterPro" id="IPR032891">
    <property type="entry name" value="WecC"/>
</dbReference>
<dbReference type="NCBIfam" id="TIGR03026">
    <property type="entry name" value="NDP-sugDHase"/>
    <property type="match status" value="1"/>
</dbReference>
<dbReference type="NCBIfam" id="NF008286">
    <property type="entry name" value="PRK11064.1"/>
    <property type="match status" value="1"/>
</dbReference>
<dbReference type="PANTHER" id="PTHR43491">
    <property type="entry name" value="UDP-N-ACETYL-D-MANNOSAMINE DEHYDROGENASE"/>
    <property type="match status" value="1"/>
</dbReference>
<dbReference type="PANTHER" id="PTHR43491:SF1">
    <property type="entry name" value="UDP-N-ACETYL-D-MANNOSAMINE DEHYDROGENASE"/>
    <property type="match status" value="1"/>
</dbReference>
<dbReference type="Pfam" id="PF00984">
    <property type="entry name" value="UDPG_MGDP_dh"/>
    <property type="match status" value="1"/>
</dbReference>
<dbReference type="Pfam" id="PF03720">
    <property type="entry name" value="UDPG_MGDP_dh_C"/>
    <property type="match status" value="1"/>
</dbReference>
<dbReference type="Pfam" id="PF03721">
    <property type="entry name" value="UDPG_MGDP_dh_N"/>
    <property type="match status" value="1"/>
</dbReference>
<dbReference type="PIRSF" id="PIRSF500136">
    <property type="entry name" value="UDP_ManNAc_DH"/>
    <property type="match status" value="1"/>
</dbReference>
<dbReference type="PIRSF" id="PIRSF000124">
    <property type="entry name" value="UDPglc_GDPman_dh"/>
    <property type="match status" value="1"/>
</dbReference>
<dbReference type="SMART" id="SM00984">
    <property type="entry name" value="UDPG_MGDP_dh_C"/>
    <property type="match status" value="1"/>
</dbReference>
<dbReference type="SUPFAM" id="SSF48179">
    <property type="entry name" value="6-phosphogluconate dehydrogenase C-terminal domain-like"/>
    <property type="match status" value="1"/>
</dbReference>
<dbReference type="SUPFAM" id="SSF51735">
    <property type="entry name" value="NAD(P)-binding Rossmann-fold domains"/>
    <property type="match status" value="1"/>
</dbReference>
<dbReference type="SUPFAM" id="SSF52413">
    <property type="entry name" value="UDP-glucose/GDP-mannose dehydrogenase C-terminal domain"/>
    <property type="match status" value="1"/>
</dbReference>
<evidence type="ECO:0000255" key="1">
    <source>
        <dbReference type="HAMAP-Rule" id="MF_02029"/>
    </source>
</evidence>
<accession>P67066</accession>
<accession>Q8XAR7</accession>
<proteinExistence type="inferred from homology"/>
<comment type="function">
    <text evidence="1">Catalyzes the four-electron oxidation of UDP-N-acetyl-D-mannosamine (UDP-ManNAc), reducing NAD(+) and releasing UDP-N-acetylmannosaminuronic acid (UDP-ManNAcA).</text>
</comment>
<comment type="catalytic activity">
    <reaction evidence="1">
        <text>UDP-N-acetyl-alpha-D-mannosamine + 2 NAD(+) + H2O = UDP-N-acetyl-alpha-D-mannosaminouronate + 2 NADH + 3 H(+)</text>
        <dbReference type="Rhea" id="RHEA:25780"/>
        <dbReference type="ChEBI" id="CHEBI:15377"/>
        <dbReference type="ChEBI" id="CHEBI:15378"/>
        <dbReference type="ChEBI" id="CHEBI:57540"/>
        <dbReference type="ChEBI" id="CHEBI:57945"/>
        <dbReference type="ChEBI" id="CHEBI:68623"/>
        <dbReference type="ChEBI" id="CHEBI:70731"/>
        <dbReference type="EC" id="1.1.1.336"/>
    </reaction>
</comment>
<comment type="pathway">
    <text evidence="1">Bacterial outer membrane biogenesis; enterobacterial common antigen biosynthesis.</text>
</comment>
<comment type="subunit">
    <text evidence="1">Homodimer.</text>
</comment>
<comment type="similarity">
    <text evidence="1">Belongs to the UDP-glucose/GDP-mannose dehydrogenase family. WecC subfamily.</text>
</comment>
<name>WECC_ECO57</name>
<organism>
    <name type="scientific">Escherichia coli O157:H7</name>
    <dbReference type="NCBI Taxonomy" id="83334"/>
    <lineage>
        <taxon>Bacteria</taxon>
        <taxon>Pseudomonadati</taxon>
        <taxon>Pseudomonadota</taxon>
        <taxon>Gammaproteobacteria</taxon>
        <taxon>Enterobacterales</taxon>
        <taxon>Enterobacteriaceae</taxon>
        <taxon>Escherichia</taxon>
    </lineage>
</organism>
<protein>
    <recommendedName>
        <fullName evidence="1">UDP-N-acetyl-D-mannosamine dehydrogenase</fullName>
        <ecNumber evidence="1">1.1.1.336</ecNumber>
    </recommendedName>
    <alternativeName>
        <fullName evidence="1">UDP-ManNAc 6-dehydrogenase</fullName>
    </alternativeName>
</protein>
<keyword id="KW-0520">NAD</keyword>
<keyword id="KW-0560">Oxidoreductase</keyword>
<keyword id="KW-1185">Reference proteome</keyword>
<feature type="chain" id="PRO_0000074078" description="UDP-N-acetyl-D-mannosamine dehydrogenase">
    <location>
        <begin position="1"/>
        <end position="420"/>
    </location>
</feature>
<feature type="active site" description="Proton donor/acceptor" evidence="1">
    <location>
        <position position="212"/>
    </location>
</feature>
<feature type="active site" description="Nucleophile" evidence="1">
    <location>
        <position position="266"/>
    </location>
</feature>
<feature type="binding site" description="in chain A" evidence="1">
    <location>
        <position position="13"/>
    </location>
    <ligand>
        <name>NAD(+)</name>
        <dbReference type="ChEBI" id="CHEBI:57540"/>
        <note>ligand shared between homodimeric partners</note>
    </ligand>
</feature>
<feature type="binding site" description="in chain A" evidence="1">
    <location>
        <position position="14"/>
    </location>
    <ligand>
        <name>NAD(+)</name>
        <dbReference type="ChEBI" id="CHEBI:57540"/>
        <note>ligand shared between homodimeric partners</note>
    </ligand>
</feature>
<feature type="binding site" description="in chain A" evidence="1">
    <location>
        <position position="33"/>
    </location>
    <ligand>
        <name>NAD(+)</name>
        <dbReference type="ChEBI" id="CHEBI:57540"/>
        <note>ligand shared between homodimeric partners</note>
    </ligand>
</feature>
<feature type="binding site" description="in chain A" evidence="1">
    <location>
        <position position="85"/>
    </location>
    <ligand>
        <name>NAD(+)</name>
        <dbReference type="ChEBI" id="CHEBI:57540"/>
        <note>ligand shared between homodimeric partners</note>
    </ligand>
</feature>
<feature type="binding site" description="in chain A" evidence="1">
    <location>
        <position position="126"/>
    </location>
    <ligand>
        <name>NAD(+)</name>
        <dbReference type="ChEBI" id="CHEBI:57540"/>
        <note>ligand shared between homodimeric partners</note>
    </ligand>
</feature>
<feature type="binding site" description="in chain A" evidence="1">
    <location>
        <position position="160"/>
    </location>
    <ligand>
        <name>UDP-N-acetyl-alpha-D-mannosaminouronate</name>
        <dbReference type="ChEBI" id="CHEBI:70731"/>
        <note>ligand shared between homodimeric partners</note>
    </ligand>
</feature>
<feature type="binding site" description="in chain A" evidence="1">
    <location>
        <position position="161"/>
    </location>
    <ligand>
        <name>UDP-N-acetyl-alpha-D-mannosaminouronate</name>
        <dbReference type="ChEBI" id="CHEBI:70731"/>
        <note>ligand shared between homodimeric partners</note>
    </ligand>
</feature>
<feature type="binding site" description="in chain A" evidence="1">
    <location>
        <position position="212"/>
    </location>
    <ligand>
        <name>UDP-N-acetyl-alpha-D-mannosaminouronate</name>
        <dbReference type="ChEBI" id="CHEBI:70731"/>
        <note>ligand shared between homodimeric partners</note>
    </ligand>
</feature>
<feature type="binding site" description="in chain A" evidence="1">
    <location>
        <position position="216"/>
    </location>
    <ligand>
        <name>UDP-N-acetyl-alpha-D-mannosaminouronate</name>
        <dbReference type="ChEBI" id="CHEBI:70731"/>
        <note>ligand shared between homodimeric partners</note>
    </ligand>
</feature>
<feature type="binding site" description="in chain A" evidence="1">
    <location>
        <position position="219"/>
    </location>
    <ligand>
        <name>UDP-N-acetyl-alpha-D-mannosaminouronate</name>
        <dbReference type="ChEBI" id="CHEBI:70731"/>
        <note>ligand shared between homodimeric partners</note>
    </ligand>
</feature>
<feature type="binding site" description="in chain B" evidence="1">
    <location>
        <position position="250"/>
    </location>
    <ligand>
        <name>UDP-N-acetyl-alpha-D-mannosaminouronate</name>
        <dbReference type="ChEBI" id="CHEBI:70731"/>
        <note>ligand shared between homodimeric partners</note>
    </ligand>
</feature>
<feature type="binding site" description="in chain B" evidence="1">
    <location>
        <position position="252"/>
    </location>
    <ligand>
        <name>UDP-N-acetyl-alpha-D-mannosaminouronate</name>
        <dbReference type="ChEBI" id="CHEBI:70731"/>
        <note>ligand shared between homodimeric partners</note>
    </ligand>
</feature>
<feature type="binding site" description="in chain A" evidence="1">
    <location>
        <position position="263"/>
    </location>
    <ligand>
        <name>UDP-N-acetyl-alpha-D-mannosaminouronate</name>
        <dbReference type="ChEBI" id="CHEBI:70731"/>
        <note>ligand shared between homodimeric partners</note>
    </ligand>
</feature>
<feature type="binding site" description="in chain A" evidence="1">
    <location>
        <position position="330"/>
    </location>
    <ligand>
        <name>UDP-N-acetyl-alpha-D-mannosaminouronate</name>
        <dbReference type="ChEBI" id="CHEBI:70731"/>
        <note>ligand shared between homodimeric partners</note>
    </ligand>
</feature>
<feature type="binding site" description="in chain A" evidence="1">
    <location>
        <position position="331"/>
    </location>
    <ligand>
        <name>UDP-N-acetyl-alpha-D-mannosaminouronate</name>
        <dbReference type="ChEBI" id="CHEBI:70731"/>
        <note>ligand shared between homodimeric partners</note>
    </ligand>
</feature>
<feature type="binding site" description="in chain B" evidence="1">
    <location>
        <position position="338"/>
    </location>
    <ligand>
        <name>NAD(+)</name>
        <dbReference type="ChEBI" id="CHEBI:57540"/>
        <note>ligand shared between homodimeric partners</note>
    </ligand>
</feature>
<feature type="binding site" description="in chain A" evidence="1">
    <location>
        <position position="416"/>
    </location>
    <ligand>
        <name>UDP-N-acetyl-alpha-D-mannosaminouronate</name>
        <dbReference type="ChEBI" id="CHEBI:70731"/>
        <note>ligand shared between homodimeric partners</note>
    </ligand>
</feature>